<organism>
    <name type="scientific">Herminiimonas arsenicoxydans</name>
    <dbReference type="NCBI Taxonomy" id="204773"/>
    <lineage>
        <taxon>Bacteria</taxon>
        <taxon>Pseudomonadati</taxon>
        <taxon>Pseudomonadota</taxon>
        <taxon>Betaproteobacteria</taxon>
        <taxon>Burkholderiales</taxon>
        <taxon>Oxalobacteraceae</taxon>
        <taxon>Herminiimonas</taxon>
    </lineage>
</organism>
<evidence type="ECO:0000255" key="1">
    <source>
        <dbReference type="HAMAP-Rule" id="MF_00686"/>
    </source>
</evidence>
<keyword id="KW-0408">Iron</keyword>
<keyword id="KW-1185">Reference proteome</keyword>
<proteinExistence type="inferred from homology"/>
<feature type="chain" id="PRO_1000045041" description="Probable Fe(2+)-trafficking protein">
    <location>
        <begin position="1"/>
        <end position="90"/>
    </location>
</feature>
<name>FETP_HERAR</name>
<gene>
    <name type="ordered locus">HEAR1077</name>
</gene>
<reference key="1">
    <citation type="journal article" date="2007" name="PLoS Genet.">
        <title>A tale of two oxidation states: bacterial colonization of arsenic-rich environments.</title>
        <authorList>
            <person name="Muller D."/>
            <person name="Medigue C."/>
            <person name="Koechler S."/>
            <person name="Barbe V."/>
            <person name="Barakat M."/>
            <person name="Talla E."/>
            <person name="Bonnefoy V."/>
            <person name="Krin E."/>
            <person name="Arsene-Ploetze F."/>
            <person name="Carapito C."/>
            <person name="Chandler M."/>
            <person name="Cournoyer B."/>
            <person name="Cruveiller S."/>
            <person name="Dossat C."/>
            <person name="Duval S."/>
            <person name="Heymann M."/>
            <person name="Leize E."/>
            <person name="Lieutaud A."/>
            <person name="Lievremont D."/>
            <person name="Makita Y."/>
            <person name="Mangenot S."/>
            <person name="Nitschke W."/>
            <person name="Ortet P."/>
            <person name="Perdrial N."/>
            <person name="Schoepp B."/>
            <person name="Siguier P."/>
            <person name="Simeonova D.D."/>
            <person name="Rouy Z."/>
            <person name="Segurens B."/>
            <person name="Turlin E."/>
            <person name="Vallenet D."/>
            <person name="van Dorsselaer A."/>
            <person name="Weiss S."/>
            <person name="Weissenbach J."/>
            <person name="Lett M.-C."/>
            <person name="Danchin A."/>
            <person name="Bertin P.N."/>
        </authorList>
    </citation>
    <scope>NUCLEOTIDE SEQUENCE [LARGE SCALE GENOMIC DNA]</scope>
    <source>
        <strain>ULPAs1</strain>
    </source>
</reference>
<protein>
    <recommendedName>
        <fullName evidence="1">Probable Fe(2+)-trafficking protein</fullName>
    </recommendedName>
</protein>
<sequence>MTRMVHCIKLDKEAEALDFPPYPGELGKRIYESVSKEAWAAWLKHQTMLVNENRLNLADVRARKYLATQMEKHFFGEGADAAQGYVPPTE</sequence>
<comment type="function">
    <text evidence="1">Could be a mediator in iron transactions between iron acquisition and iron-requiring processes, such as synthesis and/or repair of Fe-S clusters in biosynthetic enzymes.</text>
</comment>
<comment type="similarity">
    <text evidence="1">Belongs to the Fe(2+)-trafficking protein family.</text>
</comment>
<dbReference type="EMBL" id="CU207211">
    <property type="protein sequence ID" value="CAL61256.1"/>
    <property type="molecule type" value="Genomic_DNA"/>
</dbReference>
<dbReference type="SMR" id="A4G419"/>
<dbReference type="STRING" id="204773.HEAR1077"/>
<dbReference type="KEGG" id="har:HEAR1077"/>
<dbReference type="eggNOG" id="COG2924">
    <property type="taxonomic scope" value="Bacteria"/>
</dbReference>
<dbReference type="HOGENOM" id="CLU_170994_0_0_4"/>
<dbReference type="OrthoDB" id="9804318at2"/>
<dbReference type="Proteomes" id="UP000006697">
    <property type="component" value="Chromosome"/>
</dbReference>
<dbReference type="GO" id="GO:0005829">
    <property type="term" value="C:cytosol"/>
    <property type="evidence" value="ECO:0007669"/>
    <property type="project" value="TreeGrafter"/>
</dbReference>
<dbReference type="GO" id="GO:0005506">
    <property type="term" value="F:iron ion binding"/>
    <property type="evidence" value="ECO:0007669"/>
    <property type="project" value="UniProtKB-UniRule"/>
</dbReference>
<dbReference type="GO" id="GO:0034599">
    <property type="term" value="P:cellular response to oxidative stress"/>
    <property type="evidence" value="ECO:0007669"/>
    <property type="project" value="TreeGrafter"/>
</dbReference>
<dbReference type="FunFam" id="1.10.3880.10:FF:000001">
    <property type="entry name" value="Probable Fe(2+)-trafficking protein"/>
    <property type="match status" value="1"/>
</dbReference>
<dbReference type="Gene3D" id="1.10.3880.10">
    <property type="entry name" value="Fe(II) trafficking protein YggX"/>
    <property type="match status" value="1"/>
</dbReference>
<dbReference type="HAMAP" id="MF_00686">
    <property type="entry name" value="Fe_traffic_YggX"/>
    <property type="match status" value="1"/>
</dbReference>
<dbReference type="InterPro" id="IPR007457">
    <property type="entry name" value="Fe_traffick_prot_YggX"/>
</dbReference>
<dbReference type="InterPro" id="IPR036766">
    <property type="entry name" value="Fe_traffick_prot_YggX_sf"/>
</dbReference>
<dbReference type="NCBIfam" id="NF003817">
    <property type="entry name" value="PRK05408.1"/>
    <property type="match status" value="1"/>
</dbReference>
<dbReference type="PANTHER" id="PTHR36965">
    <property type="entry name" value="FE(2+)-TRAFFICKING PROTEIN-RELATED"/>
    <property type="match status" value="1"/>
</dbReference>
<dbReference type="PANTHER" id="PTHR36965:SF1">
    <property type="entry name" value="FE(2+)-TRAFFICKING PROTEIN-RELATED"/>
    <property type="match status" value="1"/>
</dbReference>
<dbReference type="Pfam" id="PF04362">
    <property type="entry name" value="Iron_traffic"/>
    <property type="match status" value="1"/>
</dbReference>
<dbReference type="PIRSF" id="PIRSF029827">
    <property type="entry name" value="Fe_traffic_YggX"/>
    <property type="match status" value="1"/>
</dbReference>
<dbReference type="SUPFAM" id="SSF111148">
    <property type="entry name" value="YggX-like"/>
    <property type="match status" value="1"/>
</dbReference>
<accession>A4G419</accession>